<gene>
    <name evidence="1" type="primary">ydiU</name>
    <name evidence="1" type="synonym">selO</name>
    <name type="ordered locus">PFL_0486</name>
</gene>
<organism>
    <name type="scientific">Pseudomonas fluorescens (strain ATCC BAA-477 / NRRL B-23932 / Pf-5)</name>
    <dbReference type="NCBI Taxonomy" id="220664"/>
    <lineage>
        <taxon>Bacteria</taxon>
        <taxon>Pseudomonadati</taxon>
        <taxon>Pseudomonadota</taxon>
        <taxon>Gammaproteobacteria</taxon>
        <taxon>Pseudomonadales</taxon>
        <taxon>Pseudomonadaceae</taxon>
        <taxon>Pseudomonas</taxon>
    </lineage>
</organism>
<proteinExistence type="inferred from homology"/>
<dbReference type="EC" id="2.7.7.-" evidence="1"/>
<dbReference type="EC" id="2.7.7.108" evidence="1"/>
<dbReference type="EMBL" id="CP000076">
    <property type="protein sequence ID" value="AAY95895.1"/>
    <property type="molecule type" value="Genomic_DNA"/>
</dbReference>
<dbReference type="RefSeq" id="WP_011058859.1">
    <property type="nucleotide sequence ID" value="NC_004129.6"/>
</dbReference>
<dbReference type="SMR" id="Q4KJF3"/>
<dbReference type="STRING" id="220664.PFL_0486"/>
<dbReference type="KEGG" id="pfl:PFL_0486"/>
<dbReference type="PATRIC" id="fig|220664.5.peg.499"/>
<dbReference type="eggNOG" id="COG0397">
    <property type="taxonomic scope" value="Bacteria"/>
</dbReference>
<dbReference type="HOGENOM" id="CLU_010245_4_0_6"/>
<dbReference type="Proteomes" id="UP000008540">
    <property type="component" value="Chromosome"/>
</dbReference>
<dbReference type="GO" id="GO:0070733">
    <property type="term" value="F:AMPylase activity"/>
    <property type="evidence" value="ECO:0007669"/>
    <property type="project" value="TreeGrafter"/>
</dbReference>
<dbReference type="GO" id="GO:0005524">
    <property type="term" value="F:ATP binding"/>
    <property type="evidence" value="ECO:0007669"/>
    <property type="project" value="UniProtKB-UniRule"/>
</dbReference>
<dbReference type="GO" id="GO:0000287">
    <property type="term" value="F:magnesium ion binding"/>
    <property type="evidence" value="ECO:0007669"/>
    <property type="project" value="UniProtKB-UniRule"/>
</dbReference>
<dbReference type="HAMAP" id="MF_00692">
    <property type="entry name" value="YdiU_SelO"/>
    <property type="match status" value="1"/>
</dbReference>
<dbReference type="InterPro" id="IPR003846">
    <property type="entry name" value="SelO"/>
</dbReference>
<dbReference type="NCBIfam" id="NF000658">
    <property type="entry name" value="PRK00029.1"/>
    <property type="match status" value="1"/>
</dbReference>
<dbReference type="NCBIfam" id="NF045949">
    <property type="entry name" value="PrtAdtaseSelOPseudom"/>
    <property type="match status" value="1"/>
</dbReference>
<dbReference type="PANTHER" id="PTHR32057">
    <property type="entry name" value="PROTEIN ADENYLYLTRANSFERASE SELO, MITOCHONDRIAL"/>
    <property type="match status" value="1"/>
</dbReference>
<dbReference type="PANTHER" id="PTHR32057:SF14">
    <property type="entry name" value="PROTEIN ADENYLYLTRANSFERASE SELO, MITOCHONDRIAL"/>
    <property type="match status" value="1"/>
</dbReference>
<dbReference type="Pfam" id="PF02696">
    <property type="entry name" value="SelO"/>
    <property type="match status" value="1"/>
</dbReference>
<accession>Q4KJF3</accession>
<sequence length="487" mass="55305">MKALDELTFDNRFARLGDAFSTHVLPEPLDNPRLVAASPGAMALLDLDPAVAETPVFAELFGGHKLWAEAEPRAMVYSGHQFGSYNPQLGDGRGLLLGEVYNQAGEHWDLHLKGAGQTPYSRMGDGRAVLRSSIREFLASEALHALGIPSSRALCVIGSDTPVWREKQERGAMVLRLAPSHVRFGHFEYFYYTKKPEQQKQLGEHVLALHFPECQELPEPYLAMFREIVERNAELIAKWQAYGFCHGVMNTDNMSILGITFDFGPFAFLDDFDAHFICNHSDDQGRYSFSNQVPIGQWNLSALAQALTPFISVEALRESLGLFLPLYQAHYLDLMRRRLGFTQAEDDDQKLVERLLQLMQNSGVDYSLFFRRLGEHAPEQALARLRDDFVDRNGFDAWAELYRERVARDPIQGQDLRRARMHAVNPLYILRNYLAQKAIDAAEAGDYSEVRRLHQVLSRPFEEQPGMDSYAERPPEWGKHLEISCSS</sequence>
<reference key="1">
    <citation type="journal article" date="2005" name="Nat. Biotechnol.">
        <title>Complete genome sequence of the plant commensal Pseudomonas fluorescens Pf-5.</title>
        <authorList>
            <person name="Paulsen I.T."/>
            <person name="Press C.M."/>
            <person name="Ravel J."/>
            <person name="Kobayashi D.Y."/>
            <person name="Myers G.S.A."/>
            <person name="Mavrodi D.V."/>
            <person name="DeBoy R.T."/>
            <person name="Seshadri R."/>
            <person name="Ren Q."/>
            <person name="Madupu R."/>
            <person name="Dodson R.J."/>
            <person name="Durkin A.S."/>
            <person name="Brinkac L.M."/>
            <person name="Daugherty S.C."/>
            <person name="Sullivan S.A."/>
            <person name="Rosovitz M.J."/>
            <person name="Gwinn M.L."/>
            <person name="Zhou L."/>
            <person name="Schneider D.J."/>
            <person name="Cartinhour S.W."/>
            <person name="Nelson W.C."/>
            <person name="Weidman J."/>
            <person name="Watkins K."/>
            <person name="Tran K."/>
            <person name="Khouri H."/>
            <person name="Pierson E.A."/>
            <person name="Pierson L.S. III"/>
            <person name="Thomashow L.S."/>
            <person name="Loper J.E."/>
        </authorList>
    </citation>
    <scope>NUCLEOTIDE SEQUENCE [LARGE SCALE GENOMIC DNA]</scope>
    <source>
        <strain>ATCC BAA-477 / NRRL B-23932 / Pf-5</strain>
    </source>
</reference>
<evidence type="ECO:0000255" key="1">
    <source>
        <dbReference type="HAMAP-Rule" id="MF_00692"/>
    </source>
</evidence>
<comment type="function">
    <text evidence="1">Nucleotidyltransferase involved in the post-translational modification of proteins. It can catalyze the addition of adenosine monophosphate (AMP) or uridine monophosphate (UMP) to a protein, resulting in modifications known as AMPylation and UMPylation.</text>
</comment>
<comment type="catalytic activity">
    <reaction evidence="1">
        <text>L-seryl-[protein] + ATP = 3-O-(5'-adenylyl)-L-seryl-[protein] + diphosphate</text>
        <dbReference type="Rhea" id="RHEA:58120"/>
        <dbReference type="Rhea" id="RHEA-COMP:9863"/>
        <dbReference type="Rhea" id="RHEA-COMP:15073"/>
        <dbReference type="ChEBI" id="CHEBI:29999"/>
        <dbReference type="ChEBI" id="CHEBI:30616"/>
        <dbReference type="ChEBI" id="CHEBI:33019"/>
        <dbReference type="ChEBI" id="CHEBI:142516"/>
        <dbReference type="EC" id="2.7.7.108"/>
    </reaction>
</comment>
<comment type="catalytic activity">
    <reaction evidence="1">
        <text>L-threonyl-[protein] + ATP = 3-O-(5'-adenylyl)-L-threonyl-[protein] + diphosphate</text>
        <dbReference type="Rhea" id="RHEA:54292"/>
        <dbReference type="Rhea" id="RHEA-COMP:11060"/>
        <dbReference type="Rhea" id="RHEA-COMP:13847"/>
        <dbReference type="ChEBI" id="CHEBI:30013"/>
        <dbReference type="ChEBI" id="CHEBI:30616"/>
        <dbReference type="ChEBI" id="CHEBI:33019"/>
        <dbReference type="ChEBI" id="CHEBI:138113"/>
        <dbReference type="EC" id="2.7.7.108"/>
    </reaction>
</comment>
<comment type="catalytic activity">
    <reaction evidence="1">
        <text>L-tyrosyl-[protein] + ATP = O-(5'-adenylyl)-L-tyrosyl-[protein] + diphosphate</text>
        <dbReference type="Rhea" id="RHEA:54288"/>
        <dbReference type="Rhea" id="RHEA-COMP:10136"/>
        <dbReference type="Rhea" id="RHEA-COMP:13846"/>
        <dbReference type="ChEBI" id="CHEBI:30616"/>
        <dbReference type="ChEBI" id="CHEBI:33019"/>
        <dbReference type="ChEBI" id="CHEBI:46858"/>
        <dbReference type="ChEBI" id="CHEBI:83624"/>
        <dbReference type="EC" id="2.7.7.108"/>
    </reaction>
</comment>
<comment type="catalytic activity">
    <reaction evidence="1">
        <text>L-histidyl-[protein] + UTP = N(tele)-(5'-uridylyl)-L-histidyl-[protein] + diphosphate</text>
        <dbReference type="Rhea" id="RHEA:83891"/>
        <dbReference type="Rhea" id="RHEA-COMP:9745"/>
        <dbReference type="Rhea" id="RHEA-COMP:20239"/>
        <dbReference type="ChEBI" id="CHEBI:29979"/>
        <dbReference type="ChEBI" id="CHEBI:33019"/>
        <dbReference type="ChEBI" id="CHEBI:46398"/>
        <dbReference type="ChEBI" id="CHEBI:233474"/>
    </reaction>
</comment>
<comment type="catalytic activity">
    <reaction evidence="1">
        <text>L-seryl-[protein] + UTP = O-(5'-uridylyl)-L-seryl-[protein] + diphosphate</text>
        <dbReference type="Rhea" id="RHEA:64604"/>
        <dbReference type="Rhea" id="RHEA-COMP:9863"/>
        <dbReference type="Rhea" id="RHEA-COMP:16635"/>
        <dbReference type="ChEBI" id="CHEBI:29999"/>
        <dbReference type="ChEBI" id="CHEBI:33019"/>
        <dbReference type="ChEBI" id="CHEBI:46398"/>
        <dbReference type="ChEBI" id="CHEBI:156051"/>
    </reaction>
</comment>
<comment type="catalytic activity">
    <reaction evidence="1">
        <text>L-tyrosyl-[protein] + UTP = O-(5'-uridylyl)-L-tyrosyl-[protein] + diphosphate</text>
        <dbReference type="Rhea" id="RHEA:83887"/>
        <dbReference type="Rhea" id="RHEA-COMP:10136"/>
        <dbReference type="Rhea" id="RHEA-COMP:20238"/>
        <dbReference type="ChEBI" id="CHEBI:33019"/>
        <dbReference type="ChEBI" id="CHEBI:46398"/>
        <dbReference type="ChEBI" id="CHEBI:46858"/>
        <dbReference type="ChEBI" id="CHEBI:90602"/>
    </reaction>
</comment>
<comment type="cofactor">
    <cofactor evidence="1">
        <name>Mg(2+)</name>
        <dbReference type="ChEBI" id="CHEBI:18420"/>
    </cofactor>
    <cofactor evidence="1">
        <name>Mn(2+)</name>
        <dbReference type="ChEBI" id="CHEBI:29035"/>
    </cofactor>
</comment>
<comment type="similarity">
    <text evidence="1">Belongs to the SELO family.</text>
</comment>
<name>SELO_PSEF5</name>
<keyword id="KW-0067">ATP-binding</keyword>
<keyword id="KW-0460">Magnesium</keyword>
<keyword id="KW-0464">Manganese</keyword>
<keyword id="KW-0479">Metal-binding</keyword>
<keyword id="KW-0547">Nucleotide-binding</keyword>
<keyword id="KW-0548">Nucleotidyltransferase</keyword>
<keyword id="KW-0808">Transferase</keyword>
<protein>
    <recommendedName>
        <fullName evidence="1">Protein nucleotidyltransferase YdiU</fullName>
        <ecNumber evidence="1">2.7.7.-</ecNumber>
    </recommendedName>
    <alternativeName>
        <fullName evidence="1">Protein adenylyltransferase YdiU</fullName>
        <ecNumber evidence="1">2.7.7.108</ecNumber>
    </alternativeName>
    <alternativeName>
        <fullName evidence="1">Protein uridylyltransferase YdiU</fullName>
        <ecNumber evidence="1">2.7.7.-</ecNumber>
    </alternativeName>
</protein>
<feature type="chain" id="PRO_0000271846" description="Protein nucleotidyltransferase YdiU">
    <location>
        <begin position="1"/>
        <end position="487"/>
    </location>
</feature>
<feature type="active site" description="Proton acceptor" evidence="1">
    <location>
        <position position="252"/>
    </location>
</feature>
<feature type="binding site" evidence="1">
    <location>
        <position position="90"/>
    </location>
    <ligand>
        <name>ATP</name>
        <dbReference type="ChEBI" id="CHEBI:30616"/>
    </ligand>
</feature>
<feature type="binding site" evidence="1">
    <location>
        <position position="92"/>
    </location>
    <ligand>
        <name>ATP</name>
        <dbReference type="ChEBI" id="CHEBI:30616"/>
    </ligand>
</feature>
<feature type="binding site" evidence="1">
    <location>
        <position position="93"/>
    </location>
    <ligand>
        <name>ATP</name>
        <dbReference type="ChEBI" id="CHEBI:30616"/>
    </ligand>
</feature>
<feature type="binding site" evidence="1">
    <location>
        <position position="113"/>
    </location>
    <ligand>
        <name>ATP</name>
        <dbReference type="ChEBI" id="CHEBI:30616"/>
    </ligand>
</feature>
<feature type="binding site" evidence="1">
    <location>
        <position position="125"/>
    </location>
    <ligand>
        <name>ATP</name>
        <dbReference type="ChEBI" id="CHEBI:30616"/>
    </ligand>
</feature>
<feature type="binding site" evidence="1">
    <location>
        <position position="126"/>
    </location>
    <ligand>
        <name>ATP</name>
        <dbReference type="ChEBI" id="CHEBI:30616"/>
    </ligand>
</feature>
<feature type="binding site" evidence="1">
    <location>
        <position position="176"/>
    </location>
    <ligand>
        <name>ATP</name>
        <dbReference type="ChEBI" id="CHEBI:30616"/>
    </ligand>
</feature>
<feature type="binding site" evidence="1">
    <location>
        <position position="183"/>
    </location>
    <ligand>
        <name>ATP</name>
        <dbReference type="ChEBI" id="CHEBI:30616"/>
    </ligand>
</feature>
<feature type="binding site" evidence="1">
    <location>
        <position position="253"/>
    </location>
    <ligand>
        <name>Mg(2+)</name>
        <dbReference type="ChEBI" id="CHEBI:18420"/>
    </ligand>
</feature>
<feature type="binding site" evidence="1">
    <location>
        <position position="262"/>
    </location>
    <ligand>
        <name>ATP</name>
        <dbReference type="ChEBI" id="CHEBI:30616"/>
    </ligand>
</feature>
<feature type="binding site" evidence="1">
    <location>
        <position position="262"/>
    </location>
    <ligand>
        <name>Mg(2+)</name>
        <dbReference type="ChEBI" id="CHEBI:18420"/>
    </ligand>
</feature>